<accession>A6NFU8</accession>
<accession>H0YF86</accession>
<organism>
    <name type="scientific">Homo sapiens</name>
    <name type="common">Human</name>
    <dbReference type="NCBI Taxonomy" id="9606"/>
    <lineage>
        <taxon>Eukaryota</taxon>
        <taxon>Metazoa</taxon>
        <taxon>Chordata</taxon>
        <taxon>Craniata</taxon>
        <taxon>Vertebrata</taxon>
        <taxon>Euteleostomi</taxon>
        <taxon>Mammalia</taxon>
        <taxon>Eutheria</taxon>
        <taxon>Euarchontoglires</taxon>
        <taxon>Primates</taxon>
        <taxon>Haplorrhini</taxon>
        <taxon>Catarrhini</taxon>
        <taxon>Hominidae</taxon>
        <taxon>Homo</taxon>
    </lineage>
</organism>
<name>PGPIL_HUMAN</name>
<proteinExistence type="evidence at transcript level"/>
<gene>
    <name type="primary">PGPEP1L</name>
</gene>
<comment type="alternative products">
    <event type="alternative splicing"/>
    <isoform>
        <id>A6NFU8-1</id>
        <name>1</name>
        <sequence type="displayed"/>
    </isoform>
    <isoform>
        <id>A6NFU8-2</id>
        <name>2</name>
        <sequence type="described" ref="VSP_053799"/>
    </isoform>
</comment>
<comment type="similarity">
    <text evidence="3">Belongs to the peptidase C15 family.</text>
</comment>
<feature type="chain" id="PRO_0000334694" description="Pyroglutamyl-peptidase 1-like protein">
    <location>
        <begin position="1"/>
        <end position="196"/>
    </location>
</feature>
<feature type="active site" evidence="1">
    <location>
        <position position="65"/>
    </location>
</feature>
<feature type="active site" evidence="1">
    <location>
        <position position="127"/>
    </location>
</feature>
<feature type="active site" evidence="1">
    <location>
        <position position="146"/>
    </location>
</feature>
<feature type="splice variant" id="VSP_053799" description="In isoform 2." evidence="3">
    <location>
        <begin position="1"/>
        <end position="54"/>
    </location>
</feature>
<feature type="sequence variant" id="VAR_043463" description="In dbSNP:rs2715423." evidence="2">
    <original>A</original>
    <variation>V</variation>
    <location>
        <position position="142"/>
    </location>
</feature>
<feature type="sequence variant" id="VAR_043464" description="In dbSNP:rs1521484.">
    <original>E</original>
    <variation>Q</variation>
    <location>
        <position position="169"/>
    </location>
</feature>
<feature type="sequence conflict" description="In Ref. 2; BC104743." evidence="3" ref="2">
    <original>P</original>
    <variation>L</variation>
    <location>
        <position position="3"/>
    </location>
</feature>
<dbReference type="EC" id="3.4.19.-"/>
<dbReference type="EMBL" id="AC069029">
    <property type="status" value="NOT_ANNOTATED_CDS"/>
    <property type="molecule type" value="Genomic_DNA"/>
</dbReference>
<dbReference type="EMBL" id="BC104743">
    <property type="status" value="NOT_ANNOTATED_CDS"/>
    <property type="molecule type" value="mRNA"/>
</dbReference>
<dbReference type="EMBL" id="AC036108">
    <property type="status" value="NOT_ANNOTATED_CDS"/>
    <property type="molecule type" value="Genomic_DNA"/>
</dbReference>
<dbReference type="CCDS" id="CCDS53977.1">
    <molecule id="A6NFU8-1"/>
</dbReference>
<dbReference type="CCDS" id="CCDS58400.1">
    <molecule id="A6NFU8-2"/>
</dbReference>
<dbReference type="RefSeq" id="NP_001096082.2">
    <molecule id="A6NFU8-1"/>
    <property type="nucleotide sequence ID" value="NM_001102612.2"/>
</dbReference>
<dbReference type="RefSeq" id="NP_001161374.1">
    <molecule id="A6NFU8-2"/>
    <property type="nucleotide sequence ID" value="NM_001167902.2"/>
</dbReference>
<dbReference type="RefSeq" id="XP_016877422.1">
    <property type="nucleotide sequence ID" value="XM_017021933.1"/>
</dbReference>
<dbReference type="SMR" id="A6NFU8"/>
<dbReference type="BioGRID" id="126941">
    <property type="interactions" value="2"/>
</dbReference>
<dbReference type="FunCoup" id="A6NFU8">
    <property type="interactions" value="3"/>
</dbReference>
<dbReference type="STRING" id="9606.ENSP00000368199"/>
<dbReference type="BioMuta" id="PGPEP1L"/>
<dbReference type="jPOST" id="A6NFU8"/>
<dbReference type="PaxDb" id="9606-ENSP00000368199"/>
<dbReference type="ProteomicsDB" id="1078">
    <molecule id="A6NFU8-1"/>
</dbReference>
<dbReference type="ProteomicsDB" id="37991"/>
<dbReference type="Antibodypedia" id="51235">
    <property type="antibodies" value="15 antibodies from 8 providers"/>
</dbReference>
<dbReference type="DNASU" id="145814"/>
<dbReference type="Ensembl" id="ENST00000378919.6">
    <molecule id="A6NFU8-1"/>
    <property type="protein sequence ID" value="ENSP00000368199.6"/>
    <property type="gene ID" value="ENSG00000183571.11"/>
</dbReference>
<dbReference type="Ensembl" id="ENST00000535714.2">
    <molecule id="A6NFU8-2"/>
    <property type="protein sequence ID" value="ENSP00000437560.1"/>
    <property type="gene ID" value="ENSG00000183571.11"/>
</dbReference>
<dbReference type="GeneID" id="145814"/>
<dbReference type="KEGG" id="hsa:145814"/>
<dbReference type="MANE-Select" id="ENST00000535714.2">
    <molecule id="A6NFU8-2"/>
    <property type="protein sequence ID" value="ENSP00000437560.1"/>
    <property type="RefSeq nucleotide sequence ID" value="NM_001167902.2"/>
    <property type="RefSeq protein sequence ID" value="NP_001161374.1"/>
</dbReference>
<dbReference type="UCSC" id="uc002bum.4">
    <molecule id="A6NFU8-1"/>
    <property type="organism name" value="human"/>
</dbReference>
<dbReference type="AGR" id="HGNC:27080"/>
<dbReference type="CTD" id="145814"/>
<dbReference type="DisGeNET" id="145814"/>
<dbReference type="GeneCards" id="PGPEP1L"/>
<dbReference type="HGNC" id="HGNC:27080">
    <property type="gene designation" value="PGPEP1L"/>
</dbReference>
<dbReference type="HPA" id="ENSG00000183571">
    <property type="expression patterns" value="Tissue enriched (skeletal)"/>
</dbReference>
<dbReference type="neXtProt" id="NX_A6NFU8"/>
<dbReference type="OpenTargets" id="ENSG00000183571"/>
<dbReference type="PharmGKB" id="PA165479208"/>
<dbReference type="VEuPathDB" id="HostDB:ENSG00000183571"/>
<dbReference type="eggNOG" id="KOG4755">
    <property type="taxonomic scope" value="Eukaryota"/>
</dbReference>
<dbReference type="GeneTree" id="ENSGT00390000015368"/>
<dbReference type="HOGENOM" id="CLU_043960_3_0_1"/>
<dbReference type="InParanoid" id="A6NFU8"/>
<dbReference type="OMA" id="IWEDFQP"/>
<dbReference type="OrthoDB" id="407146at2759"/>
<dbReference type="PAN-GO" id="A6NFU8">
    <property type="GO annotations" value="0 GO annotations based on evolutionary models"/>
</dbReference>
<dbReference type="PhylomeDB" id="A6NFU8"/>
<dbReference type="TreeFam" id="TF313278"/>
<dbReference type="PathwayCommons" id="A6NFU8"/>
<dbReference type="BioGRID-ORCS" id="145814">
    <property type="hits" value="10 hits in 1140 CRISPR screens"/>
</dbReference>
<dbReference type="ChiTaRS" id="PGPEP1L">
    <property type="organism name" value="human"/>
</dbReference>
<dbReference type="GenomeRNAi" id="145814"/>
<dbReference type="Pharos" id="A6NFU8">
    <property type="development level" value="Tdark"/>
</dbReference>
<dbReference type="PRO" id="PR:A6NFU8"/>
<dbReference type="Proteomes" id="UP000005640">
    <property type="component" value="Chromosome 15"/>
</dbReference>
<dbReference type="RNAct" id="A6NFU8">
    <property type="molecule type" value="protein"/>
</dbReference>
<dbReference type="Bgee" id="ENSG00000183571">
    <property type="expression patterns" value="Expressed in skeletal muscle tissue and 86 other cell types or tissues"/>
</dbReference>
<dbReference type="ExpressionAtlas" id="A6NFU8">
    <property type="expression patterns" value="baseline and differential"/>
</dbReference>
<dbReference type="GO" id="GO:0008234">
    <property type="term" value="F:cysteine-type peptidase activity"/>
    <property type="evidence" value="ECO:0007669"/>
    <property type="project" value="UniProtKB-KW"/>
</dbReference>
<dbReference type="GO" id="GO:0006508">
    <property type="term" value="P:proteolysis"/>
    <property type="evidence" value="ECO:0007669"/>
    <property type="project" value="UniProtKB-KW"/>
</dbReference>
<dbReference type="FunFam" id="3.40.630.20:FF:000004">
    <property type="entry name" value="Pyroglutamyl-peptidase I like"/>
    <property type="match status" value="1"/>
</dbReference>
<dbReference type="Gene3D" id="3.40.630.20">
    <property type="entry name" value="Peptidase C15, pyroglutamyl peptidase I-like"/>
    <property type="match status" value="1"/>
</dbReference>
<dbReference type="InterPro" id="IPR016125">
    <property type="entry name" value="Peptidase_C15-like"/>
</dbReference>
<dbReference type="InterPro" id="IPR036440">
    <property type="entry name" value="Peptidase_C15-like_sf"/>
</dbReference>
<dbReference type="PANTHER" id="PTHR23402">
    <property type="entry name" value="PROTEASE FAMILY C15 PYROGLUTAMYL-PEPTIDASE I-RELATED"/>
    <property type="match status" value="1"/>
</dbReference>
<dbReference type="PANTHER" id="PTHR23402:SF15">
    <property type="entry name" value="PYROGLUTAMYL-PEPTIDASE 1-LIKE PROTEIN"/>
    <property type="match status" value="1"/>
</dbReference>
<dbReference type="Pfam" id="PF01470">
    <property type="entry name" value="Peptidase_C15"/>
    <property type="match status" value="1"/>
</dbReference>
<dbReference type="SUPFAM" id="SSF53182">
    <property type="entry name" value="Pyrrolidone carboxyl peptidase (pyroglutamate aminopeptidase)"/>
    <property type="match status" value="1"/>
</dbReference>
<reference key="1">
    <citation type="journal article" date="2006" name="Nature">
        <title>Analysis of the DNA sequence and duplication history of human chromosome 15.</title>
        <authorList>
            <person name="Zody M.C."/>
            <person name="Garber M."/>
            <person name="Sharpe T."/>
            <person name="Young S.K."/>
            <person name="Rowen L."/>
            <person name="O'Neill K."/>
            <person name="Whittaker C.A."/>
            <person name="Kamal M."/>
            <person name="Chang J.L."/>
            <person name="Cuomo C.A."/>
            <person name="Dewar K."/>
            <person name="FitzGerald M.G."/>
            <person name="Kodira C.D."/>
            <person name="Madan A."/>
            <person name="Qin S."/>
            <person name="Yang X."/>
            <person name="Abbasi N."/>
            <person name="Abouelleil A."/>
            <person name="Arachchi H.M."/>
            <person name="Baradarani L."/>
            <person name="Birditt B."/>
            <person name="Bloom S."/>
            <person name="Bloom T."/>
            <person name="Borowsky M.L."/>
            <person name="Burke J."/>
            <person name="Butler J."/>
            <person name="Cook A."/>
            <person name="DeArellano K."/>
            <person name="DeCaprio D."/>
            <person name="Dorris L. III"/>
            <person name="Dors M."/>
            <person name="Eichler E.E."/>
            <person name="Engels R."/>
            <person name="Fahey J."/>
            <person name="Fleetwood P."/>
            <person name="Friedman C."/>
            <person name="Gearin G."/>
            <person name="Hall J.L."/>
            <person name="Hensley G."/>
            <person name="Johnson E."/>
            <person name="Jones C."/>
            <person name="Kamat A."/>
            <person name="Kaur A."/>
            <person name="Locke D.P."/>
            <person name="Madan A."/>
            <person name="Munson G."/>
            <person name="Jaffe D.B."/>
            <person name="Lui A."/>
            <person name="Macdonald P."/>
            <person name="Mauceli E."/>
            <person name="Naylor J.W."/>
            <person name="Nesbitt R."/>
            <person name="Nicol R."/>
            <person name="O'Leary S.B."/>
            <person name="Ratcliffe A."/>
            <person name="Rounsley S."/>
            <person name="She X."/>
            <person name="Sneddon K.M.B."/>
            <person name="Stewart S."/>
            <person name="Sougnez C."/>
            <person name="Stone S.M."/>
            <person name="Topham K."/>
            <person name="Vincent D."/>
            <person name="Wang S."/>
            <person name="Zimmer A.R."/>
            <person name="Birren B.W."/>
            <person name="Hood L."/>
            <person name="Lander E.S."/>
            <person name="Nusbaum C."/>
        </authorList>
    </citation>
    <scope>NUCLEOTIDE SEQUENCE [LARGE SCALE GENOMIC DNA]</scope>
</reference>
<reference key="2">
    <citation type="journal article" date="2004" name="Genome Res.">
        <title>The status, quality, and expansion of the NIH full-length cDNA project: the Mammalian Gene Collection (MGC).</title>
        <authorList>
            <consortium name="The MGC Project Team"/>
        </authorList>
    </citation>
    <scope>NUCLEOTIDE SEQUENCE [LARGE SCALE MRNA] (ISOFORM 1)</scope>
    <scope>VARIANT VAL-142</scope>
</reference>
<evidence type="ECO:0000250" key="1"/>
<evidence type="ECO:0000269" key="2">
    <source>
    </source>
</evidence>
<evidence type="ECO:0000305" key="3"/>
<protein>
    <recommendedName>
        <fullName>Pyroglutamyl-peptidase 1-like protein</fullName>
        <ecNumber>3.4.19.-</ecNumber>
    </recommendedName>
</protein>
<sequence>MKPRTLVELSKLGLGNETVVQLRTLELPVDYREAKRRVTGIWEDHQPQLVVHVGMDTAAKAIILEQSGKNQGYRDADIRSFWPEGGVCLPGSPDVLESGVCMKAVCKRVAVEGVDVIFSRDAGRYVCDYTYYLSLHHGKGCAALIHVPPLSRGLPASLLGRALRVIIQEMLEEVGKPKHRAQFEENSTMVLPAKGN</sequence>
<keyword id="KW-0025">Alternative splicing</keyword>
<keyword id="KW-0378">Hydrolase</keyword>
<keyword id="KW-0645">Protease</keyword>
<keyword id="KW-1185">Reference proteome</keyword>
<keyword id="KW-0788">Thiol protease</keyword>